<protein>
    <recommendedName>
        <fullName>Hemoglobin subunit delta</fullName>
    </recommendedName>
    <alternativeName>
        <fullName>Delta-globin</fullName>
    </alternativeName>
    <alternativeName>
        <fullName>Hemoglobin delta chain</fullName>
    </alternativeName>
</protein>
<comment type="subunit">
    <text>Heterotetramer of two delta chains and two alpha chains.</text>
</comment>
<comment type="tissue specificity">
    <text>Red blood cells.</text>
</comment>
<comment type="similarity">
    <text evidence="1">Belongs to the globin family.</text>
</comment>
<organism>
    <name type="scientific">Ailuropoda melanoleuca</name>
    <name type="common">Giant panda</name>
    <dbReference type="NCBI Taxonomy" id="9646"/>
    <lineage>
        <taxon>Eukaryota</taxon>
        <taxon>Metazoa</taxon>
        <taxon>Chordata</taxon>
        <taxon>Craniata</taxon>
        <taxon>Vertebrata</taxon>
        <taxon>Euteleostomi</taxon>
        <taxon>Mammalia</taxon>
        <taxon>Eutheria</taxon>
        <taxon>Laurasiatheria</taxon>
        <taxon>Carnivora</taxon>
        <taxon>Caniformia</taxon>
        <taxon>Ursidae</taxon>
        <taxon>Ailuropoda</taxon>
    </lineage>
</organism>
<feature type="chain" id="PRO_0000053160" description="Hemoglobin subunit delta">
    <location>
        <begin position="1"/>
        <end position="147"/>
    </location>
</feature>
<feature type="domain" description="Globin" evidence="1">
    <location>
        <begin position="3"/>
        <end position="147"/>
    </location>
</feature>
<feature type="binding site" description="distal binding residue">
    <location>
        <position position="64"/>
    </location>
    <ligand>
        <name>heme b</name>
        <dbReference type="ChEBI" id="CHEBI:60344"/>
    </ligand>
    <ligandPart>
        <name>Fe</name>
        <dbReference type="ChEBI" id="CHEBI:18248"/>
    </ligandPart>
</feature>
<feature type="binding site" description="proximal binding residue">
    <location>
        <position position="93"/>
    </location>
    <ligand>
        <name>heme b</name>
        <dbReference type="ChEBI" id="CHEBI:60344"/>
    </ligand>
    <ligandPart>
        <name>Fe</name>
        <dbReference type="ChEBI" id="CHEBI:18248"/>
    </ligandPart>
</feature>
<accession>Q5XLE5</accession>
<sequence>MVHLTGEEKAAVTGLWSKVNVDEVGGEALGRLLVVYPWTQRFFDSFGDLSTPDAVMNNPKVKAHGKKVLNSFSEGLKNLDNLKGTFVKLSELHCDKLHVDPENFKLLGNVLVCVLAHHFGKEFTPQVQAAYQKVVAGVANALAHKYH</sequence>
<keyword id="KW-0349">Heme</keyword>
<keyword id="KW-0408">Iron</keyword>
<keyword id="KW-0479">Metal-binding</keyword>
<keyword id="KW-0561">Oxygen transport</keyword>
<keyword id="KW-1185">Reference proteome</keyword>
<keyword id="KW-0813">Transport</keyword>
<gene>
    <name type="primary">HBD</name>
</gene>
<evidence type="ECO:0000255" key="1">
    <source>
        <dbReference type="PROSITE-ProRule" id="PRU00238"/>
    </source>
</evidence>
<reference key="1">
    <citation type="submission" date="2004-09" db="EMBL/GenBank/DDBJ databases">
        <title>Construction of the liver and brain cDNA libraries of the giant panda.</title>
        <authorList>
            <person name="He P."/>
            <person name="Fang S."/>
        </authorList>
    </citation>
    <scope>NUCLEOTIDE SEQUENCE [MRNA]</scope>
</reference>
<name>HBD_AILME</name>
<proteinExistence type="evidence at transcript level"/>
<dbReference type="EMBL" id="AY753986">
    <property type="protein sequence ID" value="AAV28721.1"/>
    <property type="molecule type" value="mRNA"/>
</dbReference>
<dbReference type="RefSeq" id="NP_001291814.1">
    <property type="nucleotide sequence ID" value="NM_001304885.1"/>
</dbReference>
<dbReference type="SMR" id="Q5XLE5"/>
<dbReference type="GeneID" id="100499574"/>
<dbReference type="KEGG" id="aml:100499574"/>
<dbReference type="InParanoid" id="Q5XLE5"/>
<dbReference type="OrthoDB" id="9886081at2759"/>
<dbReference type="Proteomes" id="UP000008912">
    <property type="component" value="Unassembled WGS sequence"/>
</dbReference>
<dbReference type="GO" id="GO:0072562">
    <property type="term" value="C:blood microparticle"/>
    <property type="evidence" value="ECO:0007669"/>
    <property type="project" value="TreeGrafter"/>
</dbReference>
<dbReference type="GO" id="GO:0031838">
    <property type="term" value="C:haptoglobin-hemoglobin complex"/>
    <property type="evidence" value="ECO:0007669"/>
    <property type="project" value="TreeGrafter"/>
</dbReference>
<dbReference type="GO" id="GO:0005833">
    <property type="term" value="C:hemoglobin complex"/>
    <property type="evidence" value="ECO:0007669"/>
    <property type="project" value="InterPro"/>
</dbReference>
<dbReference type="GO" id="GO:0031720">
    <property type="term" value="F:haptoglobin binding"/>
    <property type="evidence" value="ECO:0007669"/>
    <property type="project" value="TreeGrafter"/>
</dbReference>
<dbReference type="GO" id="GO:0020037">
    <property type="term" value="F:heme binding"/>
    <property type="evidence" value="ECO:0007669"/>
    <property type="project" value="InterPro"/>
</dbReference>
<dbReference type="GO" id="GO:0031721">
    <property type="term" value="F:hemoglobin alpha binding"/>
    <property type="evidence" value="ECO:0007669"/>
    <property type="project" value="TreeGrafter"/>
</dbReference>
<dbReference type="GO" id="GO:0046872">
    <property type="term" value="F:metal ion binding"/>
    <property type="evidence" value="ECO:0007669"/>
    <property type="project" value="UniProtKB-KW"/>
</dbReference>
<dbReference type="GO" id="GO:0043177">
    <property type="term" value="F:organic acid binding"/>
    <property type="evidence" value="ECO:0007669"/>
    <property type="project" value="TreeGrafter"/>
</dbReference>
<dbReference type="GO" id="GO:0019825">
    <property type="term" value="F:oxygen binding"/>
    <property type="evidence" value="ECO:0007669"/>
    <property type="project" value="InterPro"/>
</dbReference>
<dbReference type="GO" id="GO:0005344">
    <property type="term" value="F:oxygen carrier activity"/>
    <property type="evidence" value="ECO:0007669"/>
    <property type="project" value="UniProtKB-KW"/>
</dbReference>
<dbReference type="GO" id="GO:0004601">
    <property type="term" value="F:peroxidase activity"/>
    <property type="evidence" value="ECO:0007669"/>
    <property type="project" value="TreeGrafter"/>
</dbReference>
<dbReference type="GO" id="GO:0042744">
    <property type="term" value="P:hydrogen peroxide catabolic process"/>
    <property type="evidence" value="ECO:0007669"/>
    <property type="project" value="TreeGrafter"/>
</dbReference>
<dbReference type="CDD" id="cd08925">
    <property type="entry name" value="Hb-beta-like"/>
    <property type="match status" value="1"/>
</dbReference>
<dbReference type="FunFam" id="1.10.490.10:FF:000001">
    <property type="entry name" value="Hemoglobin subunit beta"/>
    <property type="match status" value="1"/>
</dbReference>
<dbReference type="Gene3D" id="1.10.490.10">
    <property type="entry name" value="Globins"/>
    <property type="match status" value="1"/>
</dbReference>
<dbReference type="InterPro" id="IPR000971">
    <property type="entry name" value="Globin"/>
</dbReference>
<dbReference type="InterPro" id="IPR009050">
    <property type="entry name" value="Globin-like_sf"/>
</dbReference>
<dbReference type="InterPro" id="IPR012292">
    <property type="entry name" value="Globin/Proto"/>
</dbReference>
<dbReference type="InterPro" id="IPR002337">
    <property type="entry name" value="Hemoglobin_b"/>
</dbReference>
<dbReference type="InterPro" id="IPR050056">
    <property type="entry name" value="Hemoglobin_oxygen_transport"/>
</dbReference>
<dbReference type="PANTHER" id="PTHR11442">
    <property type="entry name" value="HEMOGLOBIN FAMILY MEMBER"/>
    <property type="match status" value="1"/>
</dbReference>
<dbReference type="PANTHER" id="PTHR11442:SF42">
    <property type="entry name" value="HEMOGLOBIN SUBUNIT BETA"/>
    <property type="match status" value="1"/>
</dbReference>
<dbReference type="Pfam" id="PF00042">
    <property type="entry name" value="Globin"/>
    <property type="match status" value="1"/>
</dbReference>
<dbReference type="PRINTS" id="PR00814">
    <property type="entry name" value="BETAHAEM"/>
</dbReference>
<dbReference type="SUPFAM" id="SSF46458">
    <property type="entry name" value="Globin-like"/>
    <property type="match status" value="1"/>
</dbReference>
<dbReference type="PROSITE" id="PS01033">
    <property type="entry name" value="GLOBIN"/>
    <property type="match status" value="1"/>
</dbReference>